<reference key="1">
    <citation type="journal article" date="1989" name="Mol. Cell. Biol.">
        <title>Spore coat genes SP60 and SP70 of Dictyostelium discoideum.</title>
        <authorList>
            <person name="Fosnaugh K.L."/>
            <person name="Loomis W.F."/>
        </authorList>
    </citation>
    <scope>NUCLEOTIDE SEQUENCE [GENOMIC DNA]</scope>
</reference>
<reference key="2">
    <citation type="journal article" date="2002" name="Nature">
        <title>Sequence and analysis of chromosome 2 of Dictyostelium discoideum.</title>
        <authorList>
            <person name="Gloeckner G."/>
            <person name="Eichinger L."/>
            <person name="Szafranski K."/>
            <person name="Pachebat J.A."/>
            <person name="Bankier A.T."/>
            <person name="Dear P.H."/>
            <person name="Lehmann R."/>
            <person name="Baumgart C."/>
            <person name="Parra G."/>
            <person name="Abril J.F."/>
            <person name="Guigo R."/>
            <person name="Kumpf K."/>
            <person name="Tunggal B."/>
            <person name="Cox E.C."/>
            <person name="Quail M.A."/>
            <person name="Platzer M."/>
            <person name="Rosenthal A."/>
            <person name="Noegel A.A."/>
        </authorList>
    </citation>
    <scope>NUCLEOTIDE SEQUENCE [LARGE SCALE GENOMIC DNA]</scope>
    <source>
        <strain>AX4</strain>
    </source>
</reference>
<reference key="3">
    <citation type="journal article" date="2005" name="Nature">
        <title>The genome of the social amoeba Dictyostelium discoideum.</title>
        <authorList>
            <person name="Eichinger L."/>
            <person name="Pachebat J.A."/>
            <person name="Gloeckner G."/>
            <person name="Rajandream M.A."/>
            <person name="Sucgang R."/>
            <person name="Berriman M."/>
            <person name="Song J."/>
            <person name="Olsen R."/>
            <person name="Szafranski K."/>
            <person name="Xu Q."/>
            <person name="Tunggal B."/>
            <person name="Kummerfeld S."/>
            <person name="Madera M."/>
            <person name="Konfortov B.A."/>
            <person name="Rivero F."/>
            <person name="Bankier A.T."/>
            <person name="Lehmann R."/>
            <person name="Hamlin N."/>
            <person name="Davies R."/>
            <person name="Gaudet P."/>
            <person name="Fey P."/>
            <person name="Pilcher K."/>
            <person name="Chen G."/>
            <person name="Saunders D."/>
            <person name="Sodergren E.J."/>
            <person name="Davis P."/>
            <person name="Kerhornou A."/>
            <person name="Nie X."/>
            <person name="Hall N."/>
            <person name="Anjard C."/>
            <person name="Hemphill L."/>
            <person name="Bason N."/>
            <person name="Farbrother P."/>
            <person name="Desany B."/>
            <person name="Just E."/>
            <person name="Morio T."/>
            <person name="Rost R."/>
            <person name="Churcher C.M."/>
            <person name="Cooper J."/>
            <person name="Haydock S."/>
            <person name="van Driessche N."/>
            <person name="Cronin A."/>
            <person name="Goodhead I."/>
            <person name="Muzny D.M."/>
            <person name="Mourier T."/>
            <person name="Pain A."/>
            <person name="Lu M."/>
            <person name="Harper D."/>
            <person name="Lindsay R."/>
            <person name="Hauser H."/>
            <person name="James K.D."/>
            <person name="Quiles M."/>
            <person name="Madan Babu M."/>
            <person name="Saito T."/>
            <person name="Buchrieser C."/>
            <person name="Wardroper A."/>
            <person name="Felder M."/>
            <person name="Thangavelu M."/>
            <person name="Johnson D."/>
            <person name="Knights A."/>
            <person name="Loulseged H."/>
            <person name="Mungall K.L."/>
            <person name="Oliver K."/>
            <person name="Price C."/>
            <person name="Quail M.A."/>
            <person name="Urushihara H."/>
            <person name="Hernandez J."/>
            <person name="Rabbinowitsch E."/>
            <person name="Steffen D."/>
            <person name="Sanders M."/>
            <person name="Ma J."/>
            <person name="Kohara Y."/>
            <person name="Sharp S."/>
            <person name="Simmonds M.N."/>
            <person name="Spiegler S."/>
            <person name="Tivey A."/>
            <person name="Sugano S."/>
            <person name="White B."/>
            <person name="Walker D."/>
            <person name="Woodward J.R."/>
            <person name="Winckler T."/>
            <person name="Tanaka Y."/>
            <person name="Shaulsky G."/>
            <person name="Schleicher M."/>
            <person name="Weinstock G.M."/>
            <person name="Rosenthal A."/>
            <person name="Cox E.C."/>
            <person name="Chisholm R.L."/>
            <person name="Gibbs R.A."/>
            <person name="Loomis W.F."/>
            <person name="Platzer M."/>
            <person name="Kay R.R."/>
            <person name="Williams J.G."/>
            <person name="Dear P.H."/>
            <person name="Noegel A.A."/>
            <person name="Barrell B.G."/>
            <person name="Kuspa A."/>
        </authorList>
    </citation>
    <scope>NUCLEOTIDE SEQUENCE [LARGE SCALE GENOMIC DNA]</scope>
    <source>
        <strain>AX4</strain>
    </source>
</reference>
<reference key="4">
    <citation type="journal article" date="1986" name="J. Cell Biol.">
        <title>Cellular and subcellular distribution of a cAMP-regulated prestalk protein and prespore protein in Dictyostelium discoideum: a study on the ontogeny of prestalk and prespore cells.</title>
        <authorList>
            <person name="Gomer R.H."/>
            <person name="Datta S."/>
            <person name="Firtel R.A."/>
        </authorList>
    </citation>
    <scope>PRELIMINARY NUCLEOTIDE SEQUENCE OF 72-170</scope>
</reference>
<keyword id="KW-0325">Glycoprotein</keyword>
<keyword id="KW-0597">Phosphoprotein</keyword>
<keyword id="KW-1185">Reference proteome</keyword>
<keyword id="KW-0677">Repeat</keyword>
<keyword id="KW-0732">Signal</keyword>
<keyword id="KW-0749">Sporulation</keyword>
<proteinExistence type="inferred from homology"/>
<comment type="PTM">
    <text>Phosphorylated and fucosylated.</text>
</comment>
<comment type="sequence caution" evidence="3">
    <conflict type="frameshift">
        <sequence resource="EMBL-CDS" id="AAA33252"/>
    </conflict>
</comment>
<dbReference type="EMBL" id="M26238">
    <property type="protein sequence ID" value="AAA33252.1"/>
    <property type="status" value="ALT_FRAME"/>
    <property type="molecule type" value="Genomic_DNA"/>
</dbReference>
<dbReference type="EMBL" id="AAFI02000019">
    <property type="protein sequence ID" value="EAL68882.1"/>
    <property type="molecule type" value="Genomic_DNA"/>
</dbReference>
<dbReference type="PIR" id="B25439">
    <property type="entry name" value="B25439"/>
</dbReference>
<dbReference type="PIR" id="B33485">
    <property type="entry name" value="B33485"/>
</dbReference>
<dbReference type="RefSeq" id="XP_642813.1">
    <property type="nucleotide sequence ID" value="XM_637721.1"/>
</dbReference>
<dbReference type="FunCoup" id="P15269">
    <property type="interactions" value="645"/>
</dbReference>
<dbReference type="STRING" id="44689.P15269"/>
<dbReference type="GlyCosmos" id="P15269">
    <property type="glycosylation" value="1 site, No reported glycans"/>
</dbReference>
<dbReference type="GlyGen" id="P15269">
    <property type="glycosylation" value="3 sites"/>
</dbReference>
<dbReference type="PaxDb" id="44689-DDB0185091"/>
<dbReference type="EnsemblProtists" id="EAL68882">
    <property type="protein sequence ID" value="EAL68882"/>
    <property type="gene ID" value="DDB_G0276761"/>
</dbReference>
<dbReference type="GeneID" id="8620676"/>
<dbReference type="KEGG" id="ddi:DDB_G0276761"/>
<dbReference type="dictyBase" id="DDB_G0276761">
    <property type="gene designation" value="cotB"/>
</dbReference>
<dbReference type="VEuPathDB" id="AmoebaDB:DDB_G0276761"/>
<dbReference type="eggNOG" id="ENOG502RD3M">
    <property type="taxonomic scope" value="Eukaryota"/>
</dbReference>
<dbReference type="HOGENOM" id="CLU_507566_0_0_1"/>
<dbReference type="InParanoid" id="P15269"/>
<dbReference type="OMA" id="CCPIIPI"/>
<dbReference type="PhylomeDB" id="P15269"/>
<dbReference type="PRO" id="PR:P15269"/>
<dbReference type="Proteomes" id="UP000002195">
    <property type="component" value="Chromosome 2"/>
</dbReference>
<dbReference type="GO" id="GO:0090665">
    <property type="term" value="C:glycoprotein complex"/>
    <property type="evidence" value="ECO:0000314"/>
    <property type="project" value="dictyBase"/>
</dbReference>
<dbReference type="GO" id="GO:0031160">
    <property type="term" value="C:spore wall"/>
    <property type="evidence" value="ECO:0000314"/>
    <property type="project" value="dictyBase"/>
</dbReference>
<dbReference type="GO" id="GO:0003677">
    <property type="term" value="F:DNA binding"/>
    <property type="evidence" value="ECO:0000314"/>
    <property type="project" value="dictyBase"/>
</dbReference>
<dbReference type="GO" id="GO:0031153">
    <property type="term" value="P:slug development involved in sorocarp development"/>
    <property type="evidence" value="ECO:0000270"/>
    <property type="project" value="dictyBase"/>
</dbReference>
<dbReference type="GO" id="GO:0042244">
    <property type="term" value="P:spore wall assembly"/>
    <property type="evidence" value="ECO:0000315"/>
    <property type="project" value="dictyBase"/>
</dbReference>
<dbReference type="GO" id="GO:0030435">
    <property type="term" value="P:sporulation resulting in formation of a cellular spore"/>
    <property type="evidence" value="ECO:0000315"/>
    <property type="project" value="dictyBase"/>
</dbReference>
<dbReference type="InterPro" id="IPR007643">
    <property type="entry name" value="Dict_spore_N"/>
</dbReference>
<dbReference type="InterPro" id="IPR003645">
    <property type="entry name" value="Fol_N"/>
</dbReference>
<dbReference type="Pfam" id="PF04562">
    <property type="entry name" value="Dicty_spore_N"/>
    <property type="match status" value="1"/>
</dbReference>
<dbReference type="SMART" id="SM00274">
    <property type="entry name" value="FOLN"/>
    <property type="match status" value="5"/>
</dbReference>
<gene>
    <name type="primary">cotB</name>
    <name type="ORF">DDB_G0276761</name>
</gene>
<accession>P15269</accession>
<accession>P08126</accession>
<accession>Q550W9</accession>
<accession>Q86AV8</accession>
<name>SP70_DICDI</name>
<sequence>MRILKLAALSCLLFIAPSLSINCDGLSKDQCEQNFPQCQILTAKSCCGESKSYCAERDSNDCLASKISCKKDPQGNIYEFWSSCTPSSGFTDFIPSNATCSSLNCNAQQMSCKYVQQACHETSCCPDIPQCQIPATGGGPATGSATGQGTSGGTPGSCDKVNCPNGYICTIVNQLAVCVSPSSSSSSSSSTTGSHTTTGGSTTGSHTTTGGSTTGSHTTTGGSTTGSHTTTGGSTTGSHTTTGGSTTGPTCGNVNCPRGYHCEVRGSQAVCVADEFDSCANVDCGSGYHCKNGECIRDKVECDACDQINCPKGHHCISQPKGGWIGSHKKRHWQLHPEHCGGRPNKIKVICVPSPKGTCKTVQCPKGYKCKLYADGPTCVKIEKPKCLTCKDMHCESNGLLCVLTPQKKTDEECCPIIPICINPSTIAASTIATTTASTRHSTASTIASLVTGTTSGGGGMGSFGGRSDEESSDPNAILGLFEDDIFWGDNDEYFSDNYRYVDEEDIDEDFNGNDEFEIDVEGDFQEDDFEEEYAFY</sequence>
<feature type="signal peptide" evidence="1">
    <location>
        <begin position="1"/>
        <end position="20"/>
    </location>
</feature>
<feature type="chain" id="PRO_0000032671" description="Spore coat protein SP70">
    <location>
        <begin position="21"/>
        <end position="537"/>
    </location>
</feature>
<feature type="domain" description="DSCP-N">
    <location>
        <begin position="21"/>
        <end position="140"/>
    </location>
</feature>
<feature type="domain" description="Follistatin-like 1">
    <location>
        <begin position="157"/>
        <end position="179"/>
    </location>
</feature>
<feature type="domain" description="Follistatin-like 2">
    <location>
        <begin position="250"/>
        <end position="272"/>
    </location>
</feature>
<feature type="domain" description="Follistatin-like 3">
    <location>
        <begin position="278"/>
        <end position="296"/>
    </location>
</feature>
<feature type="domain" description="Follistatin-like 4">
    <location>
        <begin position="358"/>
        <end position="380"/>
    </location>
</feature>
<feature type="domain" description="Follistatin-like 5">
    <location>
        <begin position="389"/>
        <end position="415"/>
    </location>
</feature>
<feature type="region of interest" description="Disordered" evidence="2">
    <location>
        <begin position="183"/>
        <end position="246"/>
    </location>
</feature>
<feature type="glycosylation site" description="N-linked (GlcNAc...) asparagine" evidence="1">
    <location>
        <position position="97"/>
    </location>
</feature>
<organism>
    <name type="scientific">Dictyostelium discoideum</name>
    <name type="common">Social amoeba</name>
    <dbReference type="NCBI Taxonomy" id="44689"/>
    <lineage>
        <taxon>Eukaryota</taxon>
        <taxon>Amoebozoa</taxon>
        <taxon>Evosea</taxon>
        <taxon>Eumycetozoa</taxon>
        <taxon>Dictyostelia</taxon>
        <taxon>Dictyosteliales</taxon>
        <taxon>Dictyosteliaceae</taxon>
        <taxon>Dictyostelium</taxon>
    </lineage>
</organism>
<protein>
    <recommendedName>
        <fullName>Spore coat protein SP70</fullName>
    </recommendedName>
    <alternativeName>
        <fullName>Protein Beejin</fullName>
    </alternativeName>
</protein>
<evidence type="ECO:0000255" key="1"/>
<evidence type="ECO:0000256" key="2">
    <source>
        <dbReference type="SAM" id="MobiDB-lite"/>
    </source>
</evidence>
<evidence type="ECO:0000305" key="3"/>